<protein>
    <recommendedName>
        <fullName evidence="1">Thymidylate kinase</fullName>
        <ecNumber evidence="1">2.7.4.9</ecNumber>
    </recommendedName>
    <alternativeName>
        <fullName evidence="1">dTMP kinase</fullName>
    </alternativeName>
</protein>
<organism>
    <name type="scientific">Yersinia pseudotuberculosis serotype O:3 (strain YPIII)</name>
    <dbReference type="NCBI Taxonomy" id="502800"/>
    <lineage>
        <taxon>Bacteria</taxon>
        <taxon>Pseudomonadati</taxon>
        <taxon>Pseudomonadota</taxon>
        <taxon>Gammaproteobacteria</taxon>
        <taxon>Enterobacterales</taxon>
        <taxon>Yersiniaceae</taxon>
        <taxon>Yersinia</taxon>
    </lineage>
</organism>
<accession>B1JI38</accession>
<gene>
    <name evidence="1" type="primary">tmk</name>
    <name type="ordered locus">YPK_1691</name>
</gene>
<evidence type="ECO:0000255" key="1">
    <source>
        <dbReference type="HAMAP-Rule" id="MF_00165"/>
    </source>
</evidence>
<dbReference type="EC" id="2.7.4.9" evidence="1"/>
<dbReference type="EMBL" id="CP000950">
    <property type="protein sequence ID" value="ACA67984.1"/>
    <property type="molecule type" value="Genomic_DNA"/>
</dbReference>
<dbReference type="RefSeq" id="WP_012303974.1">
    <property type="nucleotide sequence ID" value="NZ_CP009792.1"/>
</dbReference>
<dbReference type="SMR" id="B1JI38"/>
<dbReference type="GeneID" id="49785530"/>
<dbReference type="KEGG" id="ypy:YPK_1691"/>
<dbReference type="PATRIC" id="fig|502800.11.peg.2353"/>
<dbReference type="GO" id="GO:0005829">
    <property type="term" value="C:cytosol"/>
    <property type="evidence" value="ECO:0007669"/>
    <property type="project" value="TreeGrafter"/>
</dbReference>
<dbReference type="GO" id="GO:0005524">
    <property type="term" value="F:ATP binding"/>
    <property type="evidence" value="ECO:0007669"/>
    <property type="project" value="UniProtKB-UniRule"/>
</dbReference>
<dbReference type="GO" id="GO:0004798">
    <property type="term" value="F:dTMP kinase activity"/>
    <property type="evidence" value="ECO:0007669"/>
    <property type="project" value="UniProtKB-UniRule"/>
</dbReference>
<dbReference type="GO" id="GO:0006233">
    <property type="term" value="P:dTDP biosynthetic process"/>
    <property type="evidence" value="ECO:0007669"/>
    <property type="project" value="InterPro"/>
</dbReference>
<dbReference type="GO" id="GO:0006235">
    <property type="term" value="P:dTTP biosynthetic process"/>
    <property type="evidence" value="ECO:0007669"/>
    <property type="project" value="UniProtKB-UniRule"/>
</dbReference>
<dbReference type="GO" id="GO:0006227">
    <property type="term" value="P:dUDP biosynthetic process"/>
    <property type="evidence" value="ECO:0007669"/>
    <property type="project" value="TreeGrafter"/>
</dbReference>
<dbReference type="CDD" id="cd01672">
    <property type="entry name" value="TMPK"/>
    <property type="match status" value="1"/>
</dbReference>
<dbReference type="FunFam" id="3.40.50.300:FF:000321">
    <property type="entry name" value="Thymidylate kinase"/>
    <property type="match status" value="1"/>
</dbReference>
<dbReference type="Gene3D" id="3.40.50.300">
    <property type="entry name" value="P-loop containing nucleotide triphosphate hydrolases"/>
    <property type="match status" value="1"/>
</dbReference>
<dbReference type="HAMAP" id="MF_00165">
    <property type="entry name" value="Thymidylate_kinase"/>
    <property type="match status" value="1"/>
</dbReference>
<dbReference type="InterPro" id="IPR027417">
    <property type="entry name" value="P-loop_NTPase"/>
</dbReference>
<dbReference type="InterPro" id="IPR039430">
    <property type="entry name" value="Thymidylate_kin-like_dom"/>
</dbReference>
<dbReference type="InterPro" id="IPR018095">
    <property type="entry name" value="Thymidylate_kin_CS"/>
</dbReference>
<dbReference type="InterPro" id="IPR018094">
    <property type="entry name" value="Thymidylate_kinase"/>
</dbReference>
<dbReference type="NCBIfam" id="TIGR00041">
    <property type="entry name" value="DTMP_kinase"/>
    <property type="match status" value="1"/>
</dbReference>
<dbReference type="PANTHER" id="PTHR10344">
    <property type="entry name" value="THYMIDYLATE KINASE"/>
    <property type="match status" value="1"/>
</dbReference>
<dbReference type="PANTHER" id="PTHR10344:SF4">
    <property type="entry name" value="UMP-CMP KINASE 2, MITOCHONDRIAL"/>
    <property type="match status" value="1"/>
</dbReference>
<dbReference type="Pfam" id="PF02223">
    <property type="entry name" value="Thymidylate_kin"/>
    <property type="match status" value="1"/>
</dbReference>
<dbReference type="SUPFAM" id="SSF52540">
    <property type="entry name" value="P-loop containing nucleoside triphosphate hydrolases"/>
    <property type="match status" value="1"/>
</dbReference>
<dbReference type="PROSITE" id="PS01331">
    <property type="entry name" value="THYMIDYLATE_KINASE"/>
    <property type="match status" value="1"/>
</dbReference>
<proteinExistence type="inferred from homology"/>
<name>KTHY_YERPY</name>
<feature type="chain" id="PRO_1000097449" description="Thymidylate kinase">
    <location>
        <begin position="1"/>
        <end position="212"/>
    </location>
</feature>
<feature type="binding site" evidence="1">
    <location>
        <begin position="10"/>
        <end position="17"/>
    </location>
    <ligand>
        <name>ATP</name>
        <dbReference type="ChEBI" id="CHEBI:30616"/>
    </ligand>
</feature>
<comment type="function">
    <text evidence="1">Phosphorylation of dTMP to form dTDP in both de novo and salvage pathways of dTTP synthesis.</text>
</comment>
<comment type="catalytic activity">
    <reaction evidence="1">
        <text>dTMP + ATP = dTDP + ADP</text>
        <dbReference type="Rhea" id="RHEA:13517"/>
        <dbReference type="ChEBI" id="CHEBI:30616"/>
        <dbReference type="ChEBI" id="CHEBI:58369"/>
        <dbReference type="ChEBI" id="CHEBI:63528"/>
        <dbReference type="ChEBI" id="CHEBI:456216"/>
        <dbReference type="EC" id="2.7.4.9"/>
    </reaction>
</comment>
<comment type="similarity">
    <text evidence="1">Belongs to the thymidylate kinase family.</text>
</comment>
<reference key="1">
    <citation type="submission" date="2008-02" db="EMBL/GenBank/DDBJ databases">
        <title>Complete sequence of Yersinia pseudotuberculosis YPIII.</title>
        <authorList>
            <consortium name="US DOE Joint Genome Institute"/>
            <person name="Copeland A."/>
            <person name="Lucas S."/>
            <person name="Lapidus A."/>
            <person name="Glavina del Rio T."/>
            <person name="Dalin E."/>
            <person name="Tice H."/>
            <person name="Bruce D."/>
            <person name="Goodwin L."/>
            <person name="Pitluck S."/>
            <person name="Munk A.C."/>
            <person name="Brettin T."/>
            <person name="Detter J.C."/>
            <person name="Han C."/>
            <person name="Tapia R."/>
            <person name="Schmutz J."/>
            <person name="Larimer F."/>
            <person name="Land M."/>
            <person name="Hauser L."/>
            <person name="Challacombe J.F."/>
            <person name="Green L."/>
            <person name="Lindler L.E."/>
            <person name="Nikolich M.P."/>
            <person name="Richardson P."/>
        </authorList>
    </citation>
    <scope>NUCLEOTIDE SEQUENCE [LARGE SCALE GENOMIC DNA]</scope>
    <source>
        <strain>YPIII</strain>
    </source>
</reference>
<keyword id="KW-0067">ATP-binding</keyword>
<keyword id="KW-0418">Kinase</keyword>
<keyword id="KW-0545">Nucleotide biosynthesis</keyword>
<keyword id="KW-0547">Nucleotide-binding</keyword>
<keyword id="KW-0808">Transferase</keyword>
<sequence length="212" mass="23058">MNSKFIVIEGLEGAGKTTARDTVVAVLRAQGINDIVFTREPGGTPLAEKLRDLIKQGIDGEVLTDKAEVLMLYAARVQLVENVIKPALARGSWVVGDRHDLSSQAYQGGGRGIDSQLMASLRDTVLGEFRPDLTLYLDLPPAVGLARARARGELDRIEQESLAFFERTRARYLELAASDASIKTIDASQPIEQVSASISQALAQWLTNQEPV</sequence>